<sequence length="132" mass="15124">MPNNYRIAKVSSLLKKEITLILQNDLENDLLRSNFISISKIEVTGDLQFCKIYISSAAEGNIRKEIIENLNLAKNYIKHILGQRIEMRRVPELTFKDDTALAKGLSVLKLLEELNNKTHNQNSQVEENNDNV</sequence>
<protein>
    <recommendedName>
        <fullName evidence="1">Ribosome-binding factor A</fullName>
    </recommendedName>
</protein>
<evidence type="ECO:0000255" key="1">
    <source>
        <dbReference type="HAMAP-Rule" id="MF_00003"/>
    </source>
</evidence>
<proteinExistence type="inferred from homology"/>
<comment type="function">
    <text evidence="1">One of several proteins that assist in the late maturation steps of the functional core of the 30S ribosomal subunit. Associates with free 30S ribosomal subunits (but not with 30S subunits that are part of 70S ribosomes or polysomes). Required for efficient processing of 16S rRNA. May interact with the 5'-terminal helix region of 16S rRNA.</text>
</comment>
<comment type="subunit">
    <text evidence="1">Monomer. Binds 30S ribosomal subunits, but not 50S ribosomal subunits or 70S ribosomes.</text>
</comment>
<comment type="subcellular location">
    <subcellularLocation>
        <location evidence="1">Cytoplasm</location>
    </subcellularLocation>
</comment>
<comment type="similarity">
    <text evidence="1">Belongs to the RbfA family.</text>
</comment>
<keyword id="KW-0963">Cytoplasm</keyword>
<keyword id="KW-0690">Ribosome biogenesis</keyword>
<organism>
    <name type="scientific">Prochlorococcus marinus (strain MIT 9515)</name>
    <dbReference type="NCBI Taxonomy" id="167542"/>
    <lineage>
        <taxon>Bacteria</taxon>
        <taxon>Bacillati</taxon>
        <taxon>Cyanobacteriota</taxon>
        <taxon>Cyanophyceae</taxon>
        <taxon>Synechococcales</taxon>
        <taxon>Prochlorococcaceae</taxon>
        <taxon>Prochlorococcus</taxon>
    </lineage>
</organism>
<accession>A2BU74</accession>
<dbReference type="EMBL" id="CP000552">
    <property type="protein sequence ID" value="ABM71335.1"/>
    <property type="molecule type" value="Genomic_DNA"/>
</dbReference>
<dbReference type="RefSeq" id="WP_011819450.1">
    <property type="nucleotide sequence ID" value="NC_008817.1"/>
</dbReference>
<dbReference type="SMR" id="A2BU74"/>
<dbReference type="STRING" id="167542.P9515_01261"/>
<dbReference type="GeneID" id="60201584"/>
<dbReference type="KEGG" id="pmc:P9515_01261"/>
<dbReference type="eggNOG" id="COG0858">
    <property type="taxonomic scope" value="Bacteria"/>
</dbReference>
<dbReference type="HOGENOM" id="CLU_089475_2_1_3"/>
<dbReference type="OrthoDB" id="307788at2"/>
<dbReference type="Proteomes" id="UP000001589">
    <property type="component" value="Chromosome"/>
</dbReference>
<dbReference type="GO" id="GO:0005829">
    <property type="term" value="C:cytosol"/>
    <property type="evidence" value="ECO:0007669"/>
    <property type="project" value="TreeGrafter"/>
</dbReference>
<dbReference type="GO" id="GO:0043024">
    <property type="term" value="F:ribosomal small subunit binding"/>
    <property type="evidence" value="ECO:0007669"/>
    <property type="project" value="TreeGrafter"/>
</dbReference>
<dbReference type="GO" id="GO:0030490">
    <property type="term" value="P:maturation of SSU-rRNA"/>
    <property type="evidence" value="ECO:0007669"/>
    <property type="project" value="UniProtKB-UniRule"/>
</dbReference>
<dbReference type="Gene3D" id="3.30.300.20">
    <property type="match status" value="1"/>
</dbReference>
<dbReference type="HAMAP" id="MF_00003">
    <property type="entry name" value="RbfA"/>
    <property type="match status" value="1"/>
</dbReference>
<dbReference type="InterPro" id="IPR015946">
    <property type="entry name" value="KH_dom-like_a/b"/>
</dbReference>
<dbReference type="InterPro" id="IPR000238">
    <property type="entry name" value="RbfA"/>
</dbReference>
<dbReference type="InterPro" id="IPR023799">
    <property type="entry name" value="RbfA_dom_sf"/>
</dbReference>
<dbReference type="InterPro" id="IPR020053">
    <property type="entry name" value="Ribosome-bd_factorA_CS"/>
</dbReference>
<dbReference type="NCBIfam" id="TIGR00082">
    <property type="entry name" value="rbfA"/>
    <property type="match status" value="1"/>
</dbReference>
<dbReference type="PANTHER" id="PTHR33515">
    <property type="entry name" value="RIBOSOME-BINDING FACTOR A, CHLOROPLASTIC-RELATED"/>
    <property type="match status" value="1"/>
</dbReference>
<dbReference type="PANTHER" id="PTHR33515:SF1">
    <property type="entry name" value="RIBOSOME-BINDING FACTOR A, CHLOROPLASTIC-RELATED"/>
    <property type="match status" value="1"/>
</dbReference>
<dbReference type="Pfam" id="PF02033">
    <property type="entry name" value="RBFA"/>
    <property type="match status" value="1"/>
</dbReference>
<dbReference type="SUPFAM" id="SSF89919">
    <property type="entry name" value="Ribosome-binding factor A, RbfA"/>
    <property type="match status" value="1"/>
</dbReference>
<dbReference type="PROSITE" id="PS01319">
    <property type="entry name" value="RBFA"/>
    <property type="match status" value="1"/>
</dbReference>
<reference key="1">
    <citation type="journal article" date="2007" name="PLoS Genet.">
        <title>Patterns and implications of gene gain and loss in the evolution of Prochlorococcus.</title>
        <authorList>
            <person name="Kettler G.C."/>
            <person name="Martiny A.C."/>
            <person name="Huang K."/>
            <person name="Zucker J."/>
            <person name="Coleman M.L."/>
            <person name="Rodrigue S."/>
            <person name="Chen F."/>
            <person name="Lapidus A."/>
            <person name="Ferriera S."/>
            <person name="Johnson J."/>
            <person name="Steglich C."/>
            <person name="Church G.M."/>
            <person name="Richardson P."/>
            <person name="Chisholm S.W."/>
        </authorList>
    </citation>
    <scope>NUCLEOTIDE SEQUENCE [LARGE SCALE GENOMIC DNA]</scope>
    <source>
        <strain>MIT 9515</strain>
    </source>
</reference>
<gene>
    <name evidence="1" type="primary">rbfA</name>
    <name type="ordered locus">P9515_01261</name>
</gene>
<feature type="chain" id="PRO_1000000167" description="Ribosome-binding factor A">
    <location>
        <begin position="1"/>
        <end position="132"/>
    </location>
</feature>
<name>RBFA_PROM5</name>